<evidence type="ECO:0000255" key="1">
    <source>
        <dbReference type="HAMAP-Rule" id="MF_00600"/>
    </source>
</evidence>
<comment type="function">
    <text evidence="1">Together with its co-chaperonin GroES, plays an essential role in assisting protein folding. The GroEL-GroES system forms a nano-cage that allows encapsulation of the non-native substrate proteins and provides a physical environment optimized to promote and accelerate protein folding.</text>
</comment>
<comment type="catalytic activity">
    <reaction evidence="1">
        <text>ATP + H2O + a folded polypeptide = ADP + phosphate + an unfolded polypeptide.</text>
        <dbReference type="EC" id="5.6.1.7"/>
    </reaction>
</comment>
<comment type="subunit">
    <text evidence="1">Forms a cylinder of 14 subunits composed of two heptameric rings stacked back-to-back. Interacts with the co-chaperonin GroES.</text>
</comment>
<comment type="subcellular location">
    <subcellularLocation>
        <location evidence="1">Cytoplasm</location>
    </subcellularLocation>
</comment>
<comment type="similarity">
    <text evidence="1">Belongs to the chaperonin (HSP60) family.</text>
</comment>
<dbReference type="EC" id="5.6.1.7" evidence="1"/>
<dbReference type="EMBL" id="CP001091">
    <property type="protein sequence ID" value="ACE61721.1"/>
    <property type="molecule type" value="Genomic_DNA"/>
</dbReference>
<dbReference type="RefSeq" id="WP_005597791.1">
    <property type="nucleotide sequence ID" value="NC_010939.1"/>
</dbReference>
<dbReference type="SMR" id="B3H1P4"/>
<dbReference type="GeneID" id="48599239"/>
<dbReference type="KEGG" id="apa:APP7_1069"/>
<dbReference type="HOGENOM" id="CLU_016503_3_0_6"/>
<dbReference type="Proteomes" id="UP000001226">
    <property type="component" value="Chromosome"/>
</dbReference>
<dbReference type="GO" id="GO:0005737">
    <property type="term" value="C:cytoplasm"/>
    <property type="evidence" value="ECO:0007669"/>
    <property type="project" value="UniProtKB-SubCell"/>
</dbReference>
<dbReference type="GO" id="GO:0005524">
    <property type="term" value="F:ATP binding"/>
    <property type="evidence" value="ECO:0007669"/>
    <property type="project" value="UniProtKB-UniRule"/>
</dbReference>
<dbReference type="GO" id="GO:0140662">
    <property type="term" value="F:ATP-dependent protein folding chaperone"/>
    <property type="evidence" value="ECO:0007669"/>
    <property type="project" value="InterPro"/>
</dbReference>
<dbReference type="GO" id="GO:0016853">
    <property type="term" value="F:isomerase activity"/>
    <property type="evidence" value="ECO:0007669"/>
    <property type="project" value="UniProtKB-KW"/>
</dbReference>
<dbReference type="GO" id="GO:0051082">
    <property type="term" value="F:unfolded protein binding"/>
    <property type="evidence" value="ECO:0007669"/>
    <property type="project" value="UniProtKB-UniRule"/>
</dbReference>
<dbReference type="GO" id="GO:0042026">
    <property type="term" value="P:protein refolding"/>
    <property type="evidence" value="ECO:0007669"/>
    <property type="project" value="UniProtKB-UniRule"/>
</dbReference>
<dbReference type="CDD" id="cd03344">
    <property type="entry name" value="GroEL"/>
    <property type="match status" value="1"/>
</dbReference>
<dbReference type="FunFam" id="1.10.560.10:FF:000001">
    <property type="entry name" value="60 kDa chaperonin"/>
    <property type="match status" value="1"/>
</dbReference>
<dbReference type="FunFam" id="3.50.7.10:FF:000001">
    <property type="entry name" value="60 kDa chaperonin"/>
    <property type="match status" value="1"/>
</dbReference>
<dbReference type="Gene3D" id="3.50.7.10">
    <property type="entry name" value="GroEL"/>
    <property type="match status" value="1"/>
</dbReference>
<dbReference type="Gene3D" id="1.10.560.10">
    <property type="entry name" value="GroEL-like equatorial domain"/>
    <property type="match status" value="1"/>
</dbReference>
<dbReference type="Gene3D" id="3.30.260.10">
    <property type="entry name" value="TCP-1-like chaperonin intermediate domain"/>
    <property type="match status" value="1"/>
</dbReference>
<dbReference type="HAMAP" id="MF_00600">
    <property type="entry name" value="CH60"/>
    <property type="match status" value="1"/>
</dbReference>
<dbReference type="InterPro" id="IPR018370">
    <property type="entry name" value="Chaperonin_Cpn60_CS"/>
</dbReference>
<dbReference type="InterPro" id="IPR001844">
    <property type="entry name" value="Cpn60/GroEL"/>
</dbReference>
<dbReference type="InterPro" id="IPR002423">
    <property type="entry name" value="Cpn60/GroEL/TCP-1"/>
</dbReference>
<dbReference type="InterPro" id="IPR027409">
    <property type="entry name" value="GroEL-like_apical_dom_sf"/>
</dbReference>
<dbReference type="InterPro" id="IPR027413">
    <property type="entry name" value="GROEL-like_equatorial_sf"/>
</dbReference>
<dbReference type="InterPro" id="IPR027410">
    <property type="entry name" value="TCP-1-like_intermed_sf"/>
</dbReference>
<dbReference type="NCBIfam" id="TIGR02348">
    <property type="entry name" value="GroEL"/>
    <property type="match status" value="1"/>
</dbReference>
<dbReference type="NCBIfam" id="NF000592">
    <property type="entry name" value="PRK00013.1"/>
    <property type="match status" value="1"/>
</dbReference>
<dbReference type="NCBIfam" id="NF009487">
    <property type="entry name" value="PRK12849.1"/>
    <property type="match status" value="1"/>
</dbReference>
<dbReference type="NCBIfam" id="NF009488">
    <property type="entry name" value="PRK12850.1"/>
    <property type="match status" value="1"/>
</dbReference>
<dbReference type="NCBIfam" id="NF009489">
    <property type="entry name" value="PRK12851.1"/>
    <property type="match status" value="1"/>
</dbReference>
<dbReference type="PANTHER" id="PTHR45633">
    <property type="entry name" value="60 KDA HEAT SHOCK PROTEIN, MITOCHONDRIAL"/>
    <property type="match status" value="1"/>
</dbReference>
<dbReference type="Pfam" id="PF00118">
    <property type="entry name" value="Cpn60_TCP1"/>
    <property type="match status" value="1"/>
</dbReference>
<dbReference type="PRINTS" id="PR00298">
    <property type="entry name" value="CHAPERONIN60"/>
</dbReference>
<dbReference type="SUPFAM" id="SSF52029">
    <property type="entry name" value="GroEL apical domain-like"/>
    <property type="match status" value="1"/>
</dbReference>
<dbReference type="SUPFAM" id="SSF48592">
    <property type="entry name" value="GroEL equatorial domain-like"/>
    <property type="match status" value="2"/>
</dbReference>
<dbReference type="PROSITE" id="PS00296">
    <property type="entry name" value="CHAPERONINS_CPN60"/>
    <property type="match status" value="1"/>
</dbReference>
<gene>
    <name evidence="1" type="primary">groEL</name>
    <name evidence="1" type="synonym">groL</name>
    <name type="ordered locus">APP7_1069</name>
</gene>
<feature type="chain" id="PRO_1000129964" description="Chaperonin GroEL">
    <location>
        <begin position="1"/>
        <end position="547"/>
    </location>
</feature>
<feature type="binding site" evidence="1">
    <location>
        <begin position="30"/>
        <end position="33"/>
    </location>
    <ligand>
        <name>ATP</name>
        <dbReference type="ChEBI" id="CHEBI:30616"/>
    </ligand>
</feature>
<feature type="binding site" evidence="1">
    <location>
        <position position="51"/>
    </location>
    <ligand>
        <name>ATP</name>
        <dbReference type="ChEBI" id="CHEBI:30616"/>
    </ligand>
</feature>
<feature type="binding site" evidence="1">
    <location>
        <begin position="87"/>
        <end position="91"/>
    </location>
    <ligand>
        <name>ATP</name>
        <dbReference type="ChEBI" id="CHEBI:30616"/>
    </ligand>
</feature>
<feature type="binding site" evidence="1">
    <location>
        <position position="415"/>
    </location>
    <ligand>
        <name>ATP</name>
        <dbReference type="ChEBI" id="CHEBI:30616"/>
    </ligand>
</feature>
<feature type="binding site" evidence="1">
    <location>
        <position position="496"/>
    </location>
    <ligand>
        <name>ATP</name>
        <dbReference type="ChEBI" id="CHEBI:30616"/>
    </ligand>
</feature>
<name>CH60_ACTP7</name>
<reference key="1">
    <citation type="submission" date="2008-06" db="EMBL/GenBank/DDBJ databases">
        <title>Genome and proteome analysis of A. pleuropneumoniae serotype 7.</title>
        <authorList>
            <person name="Linke B."/>
            <person name="Buettner F."/>
            <person name="Martinez-Arias R."/>
            <person name="Goesmann A."/>
            <person name="Baltes N."/>
            <person name="Tegetmeyer H."/>
            <person name="Singh M."/>
            <person name="Gerlach G.F."/>
        </authorList>
    </citation>
    <scope>NUCLEOTIDE SEQUENCE [LARGE SCALE GENOMIC DNA]</scope>
    <source>
        <strain>AP76</strain>
    </source>
</reference>
<proteinExistence type="inferred from homology"/>
<organism>
    <name type="scientific">Actinobacillus pleuropneumoniae serotype 7 (strain AP76)</name>
    <dbReference type="NCBI Taxonomy" id="537457"/>
    <lineage>
        <taxon>Bacteria</taxon>
        <taxon>Pseudomonadati</taxon>
        <taxon>Pseudomonadota</taxon>
        <taxon>Gammaproteobacteria</taxon>
        <taxon>Pasteurellales</taxon>
        <taxon>Pasteurellaceae</taxon>
        <taxon>Actinobacillus</taxon>
    </lineage>
</organism>
<accession>B3H1P4</accession>
<sequence>MAAKDVKFGNDARVKMLKGVNVLADAVKVTLGPKGRNVVLDKAYGAPTITKDGVSVAREIELEDKFENMGAQMVKEVASKANDAAGDGTTTATVLAQAIVNEGLKAVAAGMNPMDLKRGIDKAVVAVVEELKAISKPCETSKEIEQVGTISANSDETVGKLIAQAMEKVGKEGVITVEDGTGLDDALDVVEGMQFDRGYLSPYFINKPEAGTVELENPYIILVDKKISNIREILPVLEAVAKAGKPLLIVAEDIEGEALATLVVNTMRGIVKVAAVKAPGFGDRRKAMLQDIAILTAGTVISEEIGMELEKATLEELGQAKRVVITKDNTTIIDGIGDEAQIKARVAQIRQQIEDSTSDYDKEKLQERVAKLAGGVAVIKVGAATEVAMKEKKDRVDDALHATRAAVEEGIVPGGGVALVRAASKVATTLTGDNEEQNVGIKLALRAMEAPLRQIVTNAGEEASVVARNVKDGNGNYGYNAGTEQYGDMLEMGILDPTKVTRSALQFAASIAGLMITTECMITDLPKEEKLDPAAAMGGMGGMGGMM</sequence>
<protein>
    <recommendedName>
        <fullName evidence="1">Chaperonin GroEL</fullName>
        <ecNumber evidence="1">5.6.1.7</ecNumber>
    </recommendedName>
    <alternativeName>
        <fullName evidence="1">60 kDa chaperonin</fullName>
    </alternativeName>
    <alternativeName>
        <fullName evidence="1">Chaperonin-60</fullName>
        <shortName evidence="1">Cpn60</shortName>
    </alternativeName>
</protein>
<keyword id="KW-0067">ATP-binding</keyword>
<keyword id="KW-0143">Chaperone</keyword>
<keyword id="KW-0963">Cytoplasm</keyword>
<keyword id="KW-0413">Isomerase</keyword>
<keyword id="KW-0547">Nucleotide-binding</keyword>